<feature type="chain" id="PRO_0000211580" description="Trafficking protein particle complex subunit 5">
    <location>
        <begin position="1"/>
        <end position="188"/>
    </location>
</feature>
<feature type="modified residue" description="Phosphoserine" evidence="2">
    <location>
        <position position="10"/>
    </location>
</feature>
<feature type="sequence conflict" description="In Ref. 1; BAC37280." evidence="3" ref="1">
    <original>E</original>
    <variation>K</variation>
    <location>
        <position position="101"/>
    </location>
</feature>
<organism>
    <name type="scientific">Mus musculus</name>
    <name type="common">Mouse</name>
    <dbReference type="NCBI Taxonomy" id="10090"/>
    <lineage>
        <taxon>Eukaryota</taxon>
        <taxon>Metazoa</taxon>
        <taxon>Chordata</taxon>
        <taxon>Craniata</taxon>
        <taxon>Vertebrata</taxon>
        <taxon>Euteleostomi</taxon>
        <taxon>Mammalia</taxon>
        <taxon>Eutheria</taxon>
        <taxon>Euarchontoglires</taxon>
        <taxon>Glires</taxon>
        <taxon>Rodentia</taxon>
        <taxon>Myomorpha</taxon>
        <taxon>Muroidea</taxon>
        <taxon>Muridae</taxon>
        <taxon>Murinae</taxon>
        <taxon>Mus</taxon>
        <taxon>Mus</taxon>
    </lineage>
</organism>
<protein>
    <recommendedName>
        <fullName>Trafficking protein particle complex subunit 5</fullName>
    </recommendedName>
</protein>
<name>TPPC5_MOUSE</name>
<proteinExistence type="evidence at protein level"/>
<comment type="function">
    <text>May play a role in vesicular transport from endoplasmic reticulum to Golgi.</text>
</comment>
<comment type="subunit">
    <text evidence="1">Component of the multisubunit TRAPP (transport protein particle) complex, which includes at least TRAPPC2, TRAPPC2L, TRAPPC3, TRAPPC3L, TRAPPC4, TRAPPC5, TRAPPC8, TRAPPC9, TRAPPC10, TRAPPC11 and TRAPPC12.</text>
</comment>
<comment type="interaction">
    <interactant intactId="EBI-1172213">
        <id>Q9CQA1</id>
    </interactant>
    <interactant intactId="EBI-722888">
        <id>Q9Y296</id>
        <label>TRAPPC4</label>
    </interactant>
    <organismsDiffer>true</organismsDiffer>
    <experiments>2</experiments>
</comment>
<comment type="subcellular location">
    <subcellularLocation>
        <location evidence="1">Golgi apparatus</location>
        <location evidence="1">cis-Golgi network</location>
    </subcellularLocation>
    <subcellularLocation>
        <location evidence="1">Endoplasmic reticulum</location>
    </subcellularLocation>
</comment>
<comment type="similarity">
    <text evidence="3">Belongs to the TRAPP small subunits family. BET3 subfamily.</text>
</comment>
<keyword id="KW-0256">Endoplasmic reticulum</keyword>
<keyword id="KW-0931">ER-Golgi transport</keyword>
<keyword id="KW-0333">Golgi apparatus</keyword>
<keyword id="KW-0597">Phosphoprotein</keyword>
<keyword id="KW-1185">Reference proteome</keyword>
<keyword id="KW-0813">Transport</keyword>
<sequence>MEARFTRGKSALLERALVRPRTEVSLSAFALLFSELVQHCQSRVFSVAELQARLAALGRQVGARVLDALVAREKGARRETKVLGALLFVKGAVWKALFGKEADKLEQANDDARTFYIIEREPLINTYISVPKENSTLNCASFTAGIVEAVLTHSGFPAKVTAHWHKGTTLMIKFEEAVIARDRALEGR</sequence>
<dbReference type="EMBL" id="AK003633">
    <property type="protein sequence ID" value="BAB22901.1"/>
    <property type="molecule type" value="mRNA"/>
</dbReference>
<dbReference type="EMBL" id="AK007989">
    <property type="protein sequence ID" value="BAB25393.1"/>
    <property type="molecule type" value="mRNA"/>
</dbReference>
<dbReference type="EMBL" id="AK076212">
    <property type="protein sequence ID" value="BAC36257.1"/>
    <property type="molecule type" value="mRNA"/>
</dbReference>
<dbReference type="EMBL" id="AK078451">
    <property type="protein sequence ID" value="BAC37280.1"/>
    <property type="molecule type" value="mRNA"/>
</dbReference>
<dbReference type="EMBL" id="BC049179">
    <property type="protein sequence ID" value="AAH49179.1"/>
    <property type="molecule type" value="mRNA"/>
</dbReference>
<dbReference type="CCDS" id="CCDS22070.1"/>
<dbReference type="RefSeq" id="NP_079977.3">
    <property type="nucleotide sequence ID" value="NM_025701.4"/>
</dbReference>
<dbReference type="SMR" id="Q9CQA1"/>
<dbReference type="BioGRID" id="211642">
    <property type="interactions" value="8"/>
</dbReference>
<dbReference type="ComplexPortal" id="CPX-4764">
    <property type="entry name" value="TRAPP II complex"/>
</dbReference>
<dbReference type="ComplexPortal" id="CPX-4766">
    <property type="entry name" value="TRAPP III complex"/>
</dbReference>
<dbReference type="FunCoup" id="Q9CQA1">
    <property type="interactions" value="1120"/>
</dbReference>
<dbReference type="IntAct" id="Q9CQA1">
    <property type="interactions" value="5"/>
</dbReference>
<dbReference type="MINT" id="Q9CQA1"/>
<dbReference type="STRING" id="10090.ENSMUSP00000146674"/>
<dbReference type="iPTMnet" id="Q9CQA1"/>
<dbReference type="PhosphoSitePlus" id="Q9CQA1"/>
<dbReference type="SwissPalm" id="Q9CQA1"/>
<dbReference type="PaxDb" id="10090-ENSMUSP00000036541"/>
<dbReference type="PeptideAtlas" id="Q9CQA1"/>
<dbReference type="ProteomicsDB" id="259171"/>
<dbReference type="Pumba" id="Q9CQA1"/>
<dbReference type="Antibodypedia" id="24583">
    <property type="antibodies" value="98 antibodies from 24 providers"/>
</dbReference>
<dbReference type="Ensembl" id="ENSMUST00000044857.4">
    <property type="protein sequence ID" value="ENSMUSP00000036541.4"/>
    <property type="gene ID" value="ENSMUSG00000040236.5"/>
</dbReference>
<dbReference type="Ensembl" id="ENSMUST00000207787.2">
    <property type="protein sequence ID" value="ENSMUSP00000146674.2"/>
    <property type="gene ID" value="ENSMUSG00000040236.5"/>
</dbReference>
<dbReference type="GeneID" id="66682"/>
<dbReference type="KEGG" id="mmu:66682"/>
<dbReference type="UCSC" id="uc009ksk.2">
    <property type="organism name" value="mouse"/>
</dbReference>
<dbReference type="AGR" id="MGI:1913932"/>
<dbReference type="CTD" id="126003"/>
<dbReference type="MGI" id="MGI:1913932">
    <property type="gene designation" value="Trappc5"/>
</dbReference>
<dbReference type="VEuPathDB" id="HostDB:ENSMUSG00000040236"/>
<dbReference type="eggNOG" id="KOG3315">
    <property type="taxonomic scope" value="Eukaryota"/>
</dbReference>
<dbReference type="GeneTree" id="ENSGT00390000000976"/>
<dbReference type="HOGENOM" id="CLU_073154_2_0_1"/>
<dbReference type="InParanoid" id="Q9CQA1"/>
<dbReference type="OMA" id="YMVKFDD"/>
<dbReference type="OrthoDB" id="10254842at2759"/>
<dbReference type="PhylomeDB" id="Q9CQA1"/>
<dbReference type="TreeFam" id="TF313795"/>
<dbReference type="Reactome" id="R-MMU-204005">
    <property type="pathway name" value="COPII-mediated vesicle transport"/>
</dbReference>
<dbReference type="Reactome" id="R-MMU-8876198">
    <property type="pathway name" value="RAB GEFs exchange GTP for GDP on RABs"/>
</dbReference>
<dbReference type="BioGRID-ORCS" id="66682">
    <property type="hits" value="25 hits in 76 CRISPR screens"/>
</dbReference>
<dbReference type="ChiTaRS" id="Trappc5">
    <property type="organism name" value="mouse"/>
</dbReference>
<dbReference type="PRO" id="PR:Q9CQA1"/>
<dbReference type="Proteomes" id="UP000000589">
    <property type="component" value="Chromosome 8"/>
</dbReference>
<dbReference type="RNAct" id="Q9CQA1">
    <property type="molecule type" value="protein"/>
</dbReference>
<dbReference type="Bgee" id="ENSMUSG00000040236">
    <property type="expression patterns" value="Expressed in lens of camera-type eye and 260 other cell types or tissues"/>
</dbReference>
<dbReference type="GO" id="GO:0005737">
    <property type="term" value="C:cytoplasm"/>
    <property type="evidence" value="ECO:0000303"/>
    <property type="project" value="ComplexPortal"/>
</dbReference>
<dbReference type="GO" id="GO:0005783">
    <property type="term" value="C:endoplasmic reticulum"/>
    <property type="evidence" value="ECO:0007669"/>
    <property type="project" value="UniProtKB-SubCell"/>
</dbReference>
<dbReference type="GO" id="GO:0030008">
    <property type="term" value="C:TRAPP complex"/>
    <property type="evidence" value="ECO:0000314"/>
    <property type="project" value="MGI"/>
</dbReference>
<dbReference type="GO" id="GO:1990071">
    <property type="term" value="C:TRAPPII protein complex"/>
    <property type="evidence" value="ECO:0000303"/>
    <property type="project" value="ComplexPortal"/>
</dbReference>
<dbReference type="GO" id="GO:1990072">
    <property type="term" value="C:TRAPPIII protein complex"/>
    <property type="evidence" value="ECO:0000303"/>
    <property type="project" value="ComplexPortal"/>
</dbReference>
<dbReference type="GO" id="GO:0048208">
    <property type="term" value="P:COPII vesicle coating"/>
    <property type="evidence" value="ECO:0000303"/>
    <property type="project" value="ComplexPortal"/>
</dbReference>
<dbReference type="GO" id="GO:0006888">
    <property type="term" value="P:endoplasmic reticulum to Golgi vesicle-mediated transport"/>
    <property type="evidence" value="ECO:0000303"/>
    <property type="project" value="ComplexPortal"/>
</dbReference>
<dbReference type="GO" id="GO:0006901">
    <property type="term" value="P:vesicle coating"/>
    <property type="evidence" value="ECO:0000303"/>
    <property type="project" value="ComplexPortal"/>
</dbReference>
<dbReference type="GO" id="GO:0099022">
    <property type="term" value="P:vesicle tethering"/>
    <property type="evidence" value="ECO:0000303"/>
    <property type="project" value="ComplexPortal"/>
</dbReference>
<dbReference type="CDD" id="cd14943">
    <property type="entry name" value="TRAPPC5_Trs31"/>
    <property type="match status" value="1"/>
</dbReference>
<dbReference type="FunFam" id="3.30.1380.20:FF:000005">
    <property type="entry name" value="Trafficking protein particle complex subunit 5"/>
    <property type="match status" value="1"/>
</dbReference>
<dbReference type="Gene3D" id="3.30.1380.20">
    <property type="entry name" value="Trafficking protein particle complex subunit 3"/>
    <property type="match status" value="1"/>
</dbReference>
<dbReference type="InterPro" id="IPR024096">
    <property type="entry name" value="NO_sig/Golgi_transp_ligand-bd"/>
</dbReference>
<dbReference type="InterPro" id="IPR016696">
    <property type="entry name" value="TRAPP-I_su5"/>
</dbReference>
<dbReference type="InterPro" id="IPR007194">
    <property type="entry name" value="TRAPP_component"/>
</dbReference>
<dbReference type="PANTHER" id="PTHR20902">
    <property type="entry name" value="41-2 PROTEIN ANTIGEN-RELATED"/>
    <property type="match status" value="1"/>
</dbReference>
<dbReference type="PANTHER" id="PTHR20902:SF0">
    <property type="entry name" value="TRAFFICKING PROTEIN PARTICLE COMPLEX SUBUNIT 5"/>
    <property type="match status" value="1"/>
</dbReference>
<dbReference type="Pfam" id="PF04051">
    <property type="entry name" value="TRAPP"/>
    <property type="match status" value="1"/>
</dbReference>
<dbReference type="PIRSF" id="PIRSF017479">
    <property type="entry name" value="TRAPP_I_complex_Trs31"/>
    <property type="match status" value="1"/>
</dbReference>
<dbReference type="SUPFAM" id="SSF111126">
    <property type="entry name" value="Ligand-binding domain in the NO signalling and Golgi transport"/>
    <property type="match status" value="1"/>
</dbReference>
<gene>
    <name type="primary">Trappc5</name>
</gene>
<evidence type="ECO:0000250" key="1"/>
<evidence type="ECO:0000250" key="2">
    <source>
        <dbReference type="UniProtKB" id="Q8IUR0"/>
    </source>
</evidence>
<evidence type="ECO:0000305" key="3"/>
<reference key="1">
    <citation type="journal article" date="2005" name="Science">
        <title>The transcriptional landscape of the mammalian genome.</title>
        <authorList>
            <person name="Carninci P."/>
            <person name="Kasukawa T."/>
            <person name="Katayama S."/>
            <person name="Gough J."/>
            <person name="Frith M.C."/>
            <person name="Maeda N."/>
            <person name="Oyama R."/>
            <person name="Ravasi T."/>
            <person name="Lenhard B."/>
            <person name="Wells C."/>
            <person name="Kodzius R."/>
            <person name="Shimokawa K."/>
            <person name="Bajic V.B."/>
            <person name="Brenner S.E."/>
            <person name="Batalov S."/>
            <person name="Forrest A.R."/>
            <person name="Zavolan M."/>
            <person name="Davis M.J."/>
            <person name="Wilming L.G."/>
            <person name="Aidinis V."/>
            <person name="Allen J.E."/>
            <person name="Ambesi-Impiombato A."/>
            <person name="Apweiler R."/>
            <person name="Aturaliya R.N."/>
            <person name="Bailey T.L."/>
            <person name="Bansal M."/>
            <person name="Baxter L."/>
            <person name="Beisel K.W."/>
            <person name="Bersano T."/>
            <person name="Bono H."/>
            <person name="Chalk A.M."/>
            <person name="Chiu K.P."/>
            <person name="Choudhary V."/>
            <person name="Christoffels A."/>
            <person name="Clutterbuck D.R."/>
            <person name="Crowe M.L."/>
            <person name="Dalla E."/>
            <person name="Dalrymple B.P."/>
            <person name="de Bono B."/>
            <person name="Della Gatta G."/>
            <person name="di Bernardo D."/>
            <person name="Down T."/>
            <person name="Engstrom P."/>
            <person name="Fagiolini M."/>
            <person name="Faulkner G."/>
            <person name="Fletcher C.F."/>
            <person name="Fukushima T."/>
            <person name="Furuno M."/>
            <person name="Futaki S."/>
            <person name="Gariboldi M."/>
            <person name="Georgii-Hemming P."/>
            <person name="Gingeras T.R."/>
            <person name="Gojobori T."/>
            <person name="Green R.E."/>
            <person name="Gustincich S."/>
            <person name="Harbers M."/>
            <person name="Hayashi Y."/>
            <person name="Hensch T.K."/>
            <person name="Hirokawa N."/>
            <person name="Hill D."/>
            <person name="Huminiecki L."/>
            <person name="Iacono M."/>
            <person name="Ikeo K."/>
            <person name="Iwama A."/>
            <person name="Ishikawa T."/>
            <person name="Jakt M."/>
            <person name="Kanapin A."/>
            <person name="Katoh M."/>
            <person name="Kawasawa Y."/>
            <person name="Kelso J."/>
            <person name="Kitamura H."/>
            <person name="Kitano H."/>
            <person name="Kollias G."/>
            <person name="Krishnan S.P."/>
            <person name="Kruger A."/>
            <person name="Kummerfeld S.K."/>
            <person name="Kurochkin I.V."/>
            <person name="Lareau L.F."/>
            <person name="Lazarevic D."/>
            <person name="Lipovich L."/>
            <person name="Liu J."/>
            <person name="Liuni S."/>
            <person name="McWilliam S."/>
            <person name="Madan Babu M."/>
            <person name="Madera M."/>
            <person name="Marchionni L."/>
            <person name="Matsuda H."/>
            <person name="Matsuzawa S."/>
            <person name="Miki H."/>
            <person name="Mignone F."/>
            <person name="Miyake S."/>
            <person name="Morris K."/>
            <person name="Mottagui-Tabar S."/>
            <person name="Mulder N."/>
            <person name="Nakano N."/>
            <person name="Nakauchi H."/>
            <person name="Ng P."/>
            <person name="Nilsson R."/>
            <person name="Nishiguchi S."/>
            <person name="Nishikawa S."/>
            <person name="Nori F."/>
            <person name="Ohara O."/>
            <person name="Okazaki Y."/>
            <person name="Orlando V."/>
            <person name="Pang K.C."/>
            <person name="Pavan W.J."/>
            <person name="Pavesi G."/>
            <person name="Pesole G."/>
            <person name="Petrovsky N."/>
            <person name="Piazza S."/>
            <person name="Reed J."/>
            <person name="Reid J.F."/>
            <person name="Ring B.Z."/>
            <person name="Ringwald M."/>
            <person name="Rost B."/>
            <person name="Ruan Y."/>
            <person name="Salzberg S.L."/>
            <person name="Sandelin A."/>
            <person name="Schneider C."/>
            <person name="Schoenbach C."/>
            <person name="Sekiguchi K."/>
            <person name="Semple C.A."/>
            <person name="Seno S."/>
            <person name="Sessa L."/>
            <person name="Sheng Y."/>
            <person name="Shibata Y."/>
            <person name="Shimada H."/>
            <person name="Shimada K."/>
            <person name="Silva D."/>
            <person name="Sinclair B."/>
            <person name="Sperling S."/>
            <person name="Stupka E."/>
            <person name="Sugiura K."/>
            <person name="Sultana R."/>
            <person name="Takenaka Y."/>
            <person name="Taki K."/>
            <person name="Tammoja K."/>
            <person name="Tan S.L."/>
            <person name="Tang S."/>
            <person name="Taylor M.S."/>
            <person name="Tegner J."/>
            <person name="Teichmann S.A."/>
            <person name="Ueda H.R."/>
            <person name="van Nimwegen E."/>
            <person name="Verardo R."/>
            <person name="Wei C.L."/>
            <person name="Yagi K."/>
            <person name="Yamanishi H."/>
            <person name="Zabarovsky E."/>
            <person name="Zhu S."/>
            <person name="Zimmer A."/>
            <person name="Hide W."/>
            <person name="Bult C."/>
            <person name="Grimmond S.M."/>
            <person name="Teasdale R.D."/>
            <person name="Liu E.T."/>
            <person name="Brusic V."/>
            <person name="Quackenbush J."/>
            <person name="Wahlestedt C."/>
            <person name="Mattick J.S."/>
            <person name="Hume D.A."/>
            <person name="Kai C."/>
            <person name="Sasaki D."/>
            <person name="Tomaru Y."/>
            <person name="Fukuda S."/>
            <person name="Kanamori-Katayama M."/>
            <person name="Suzuki M."/>
            <person name="Aoki J."/>
            <person name="Arakawa T."/>
            <person name="Iida J."/>
            <person name="Imamura K."/>
            <person name="Itoh M."/>
            <person name="Kato T."/>
            <person name="Kawaji H."/>
            <person name="Kawagashira N."/>
            <person name="Kawashima T."/>
            <person name="Kojima M."/>
            <person name="Kondo S."/>
            <person name="Konno H."/>
            <person name="Nakano K."/>
            <person name="Ninomiya N."/>
            <person name="Nishio T."/>
            <person name="Okada M."/>
            <person name="Plessy C."/>
            <person name="Shibata K."/>
            <person name="Shiraki T."/>
            <person name="Suzuki S."/>
            <person name="Tagami M."/>
            <person name="Waki K."/>
            <person name="Watahiki A."/>
            <person name="Okamura-Oho Y."/>
            <person name="Suzuki H."/>
            <person name="Kawai J."/>
            <person name="Hayashizaki Y."/>
        </authorList>
    </citation>
    <scope>NUCLEOTIDE SEQUENCE [LARGE SCALE MRNA]</scope>
    <source>
        <strain>C57BL/6J</strain>
        <tissue>Head</tissue>
        <tissue>Pancreas</tissue>
        <tissue>Wolffian duct</tissue>
    </source>
</reference>
<reference key="2">
    <citation type="journal article" date="2004" name="Genome Res.">
        <title>The status, quality, and expansion of the NIH full-length cDNA project: the Mammalian Gene Collection (MGC).</title>
        <authorList>
            <consortium name="The MGC Project Team"/>
        </authorList>
    </citation>
    <scope>NUCLEOTIDE SEQUENCE [LARGE SCALE MRNA]</scope>
    <source>
        <tissue>Olfactory epithelium</tissue>
    </source>
</reference>
<reference key="3">
    <citation type="journal article" date="2010" name="Cell">
        <title>A tissue-specific atlas of mouse protein phosphorylation and expression.</title>
        <authorList>
            <person name="Huttlin E.L."/>
            <person name="Jedrychowski M.P."/>
            <person name="Elias J.E."/>
            <person name="Goswami T."/>
            <person name="Rad R."/>
            <person name="Beausoleil S.A."/>
            <person name="Villen J."/>
            <person name="Haas W."/>
            <person name="Sowa M.E."/>
            <person name="Gygi S.P."/>
        </authorList>
    </citation>
    <scope>IDENTIFICATION BY MASS SPECTROMETRY [LARGE SCALE ANALYSIS]</scope>
    <source>
        <tissue>Brain</tissue>
        <tissue>Heart</tissue>
        <tissue>Kidney</tissue>
        <tissue>Liver</tissue>
        <tissue>Lung</tissue>
        <tissue>Spleen</tissue>
        <tissue>Testis</tissue>
    </source>
</reference>
<accession>Q9CQA1</accession>
<accession>Q8BJX6</accession>